<dbReference type="EC" id="7.1.1.-" evidence="1"/>
<dbReference type="EMBL" id="CP001111">
    <property type="protein sequence ID" value="ACF52528.1"/>
    <property type="molecule type" value="Genomic_DNA"/>
</dbReference>
<dbReference type="RefSeq" id="WP_012511710.1">
    <property type="nucleotide sequence ID" value="NC_011071.1"/>
</dbReference>
<dbReference type="SMR" id="B4SQT3"/>
<dbReference type="STRING" id="391008.Smal_2828"/>
<dbReference type="KEGG" id="smt:Smal_2828"/>
<dbReference type="eggNOG" id="COG0649">
    <property type="taxonomic scope" value="Bacteria"/>
</dbReference>
<dbReference type="HOGENOM" id="CLU_015134_1_1_6"/>
<dbReference type="OrthoDB" id="9801496at2"/>
<dbReference type="Proteomes" id="UP000001867">
    <property type="component" value="Chromosome"/>
</dbReference>
<dbReference type="GO" id="GO:0005886">
    <property type="term" value="C:plasma membrane"/>
    <property type="evidence" value="ECO:0007669"/>
    <property type="project" value="UniProtKB-SubCell"/>
</dbReference>
<dbReference type="GO" id="GO:0051287">
    <property type="term" value="F:NAD binding"/>
    <property type="evidence" value="ECO:0007669"/>
    <property type="project" value="InterPro"/>
</dbReference>
<dbReference type="GO" id="GO:0050136">
    <property type="term" value="F:NADH:ubiquinone reductase (non-electrogenic) activity"/>
    <property type="evidence" value="ECO:0007669"/>
    <property type="project" value="UniProtKB-UniRule"/>
</dbReference>
<dbReference type="GO" id="GO:0048038">
    <property type="term" value="F:quinone binding"/>
    <property type="evidence" value="ECO:0007669"/>
    <property type="project" value="UniProtKB-KW"/>
</dbReference>
<dbReference type="FunFam" id="1.10.645.10:FF:000005">
    <property type="entry name" value="NADH-quinone oxidoreductase subunit D"/>
    <property type="match status" value="1"/>
</dbReference>
<dbReference type="Gene3D" id="1.10.645.10">
    <property type="entry name" value="Cytochrome-c3 Hydrogenase, chain B"/>
    <property type="match status" value="1"/>
</dbReference>
<dbReference type="HAMAP" id="MF_01358">
    <property type="entry name" value="NDH1_NuoD"/>
    <property type="match status" value="1"/>
</dbReference>
<dbReference type="InterPro" id="IPR001135">
    <property type="entry name" value="NADH_Q_OxRdtase_suD"/>
</dbReference>
<dbReference type="InterPro" id="IPR014029">
    <property type="entry name" value="NADH_UbQ_OxRdtase_49kDa_CS"/>
</dbReference>
<dbReference type="InterPro" id="IPR022885">
    <property type="entry name" value="NDH1_su_D/H"/>
</dbReference>
<dbReference type="InterPro" id="IPR029014">
    <property type="entry name" value="NiFe-Hase_large"/>
</dbReference>
<dbReference type="NCBIfam" id="TIGR01962">
    <property type="entry name" value="NuoD"/>
    <property type="match status" value="1"/>
</dbReference>
<dbReference type="NCBIfam" id="NF004739">
    <property type="entry name" value="PRK06075.1"/>
    <property type="match status" value="1"/>
</dbReference>
<dbReference type="PANTHER" id="PTHR11993:SF10">
    <property type="entry name" value="NADH DEHYDROGENASE [UBIQUINONE] IRON-SULFUR PROTEIN 2, MITOCHONDRIAL"/>
    <property type="match status" value="1"/>
</dbReference>
<dbReference type="PANTHER" id="PTHR11993">
    <property type="entry name" value="NADH-UBIQUINONE OXIDOREDUCTASE 49 KDA SUBUNIT"/>
    <property type="match status" value="1"/>
</dbReference>
<dbReference type="Pfam" id="PF00346">
    <property type="entry name" value="Complex1_49kDa"/>
    <property type="match status" value="1"/>
</dbReference>
<dbReference type="SUPFAM" id="SSF56762">
    <property type="entry name" value="HydB/Nqo4-like"/>
    <property type="match status" value="1"/>
</dbReference>
<dbReference type="PROSITE" id="PS00535">
    <property type="entry name" value="COMPLEX1_49K"/>
    <property type="match status" value="1"/>
</dbReference>
<reference key="1">
    <citation type="submission" date="2008-06" db="EMBL/GenBank/DDBJ databases">
        <title>Complete sequence of Stenotrophomonas maltophilia R551-3.</title>
        <authorList>
            <consortium name="US DOE Joint Genome Institute"/>
            <person name="Lucas S."/>
            <person name="Copeland A."/>
            <person name="Lapidus A."/>
            <person name="Glavina del Rio T."/>
            <person name="Dalin E."/>
            <person name="Tice H."/>
            <person name="Pitluck S."/>
            <person name="Chain P."/>
            <person name="Malfatti S."/>
            <person name="Shin M."/>
            <person name="Vergez L."/>
            <person name="Lang D."/>
            <person name="Schmutz J."/>
            <person name="Larimer F."/>
            <person name="Land M."/>
            <person name="Hauser L."/>
            <person name="Kyrpides N."/>
            <person name="Mikhailova N."/>
            <person name="Taghavi S."/>
            <person name="Monchy S."/>
            <person name="Newman L."/>
            <person name="Vangronsveld J."/>
            <person name="van der Lelie D."/>
            <person name="Richardson P."/>
        </authorList>
    </citation>
    <scope>NUCLEOTIDE SEQUENCE [LARGE SCALE GENOMIC DNA]</scope>
    <source>
        <strain>R551-3</strain>
    </source>
</reference>
<organism>
    <name type="scientific">Stenotrophomonas maltophilia (strain R551-3)</name>
    <dbReference type="NCBI Taxonomy" id="391008"/>
    <lineage>
        <taxon>Bacteria</taxon>
        <taxon>Pseudomonadati</taxon>
        <taxon>Pseudomonadota</taxon>
        <taxon>Gammaproteobacteria</taxon>
        <taxon>Lysobacterales</taxon>
        <taxon>Lysobacteraceae</taxon>
        <taxon>Stenotrophomonas</taxon>
        <taxon>Stenotrophomonas maltophilia group</taxon>
    </lineage>
</organism>
<protein>
    <recommendedName>
        <fullName evidence="1">NADH-quinone oxidoreductase subunit D 2</fullName>
        <ecNumber evidence="1">7.1.1.-</ecNumber>
    </recommendedName>
    <alternativeName>
        <fullName evidence="1">NADH dehydrogenase I subunit D 2</fullName>
    </alternativeName>
    <alternativeName>
        <fullName evidence="1">NDH-1 subunit D 2</fullName>
    </alternativeName>
</protein>
<feature type="chain" id="PRO_0000371927" description="NADH-quinone oxidoreductase subunit D 2">
    <location>
        <begin position="1"/>
        <end position="435"/>
    </location>
</feature>
<accession>B4SQT3</accession>
<name>NUOD2_STRM5</name>
<proteinExistence type="inferred from homology"/>
<gene>
    <name evidence="1" type="primary">nuoD2</name>
    <name type="ordered locus">Smal_2828</name>
</gene>
<keyword id="KW-0997">Cell inner membrane</keyword>
<keyword id="KW-1003">Cell membrane</keyword>
<keyword id="KW-0472">Membrane</keyword>
<keyword id="KW-0520">NAD</keyword>
<keyword id="KW-0874">Quinone</keyword>
<keyword id="KW-1278">Translocase</keyword>
<keyword id="KW-0813">Transport</keyword>
<keyword id="KW-0830">Ubiquinone</keyword>
<sequence length="435" mass="49388">MSHVHQAGEAFASSPAESRQEIRNYTMNFGPQHPAAHGVLRLILEMDGETIMRADPHVGLLHRGTEKLAESKPFNQSIGYMDRLDYVSMMCNEHAYVRSIETLMGIEAPERAQYIRTLFDEITRILNHLMWLGSNALDLGAMAVMLYAFREREELMDCYEAVSGARMHAAYYRPGGVYRDLPDHMPKYKESRWHKGKALKNLNAAREGSLLDFLENFTNEFPGRVDEYETLLTDNRIWKQRTVGIGVVTPELAHQWGMTGVMLRGSGIAWDLRKKRPYAKYDAVDFDIPLGKEGDCYDRYLVRIAEMRESNRIIKQCVAWLKANPGPVMVKNFKVAPPKREDMKDDMEALIHHFKLFSEGYCVPAGETYAAVEAPKGEFGCYLVSDGANKPFRVHLRAPGFAHLSSIDSIVRGHMLADVVAMIGTYDLVFGEVDR</sequence>
<comment type="function">
    <text evidence="1">NDH-1 shuttles electrons from NADH, via FMN and iron-sulfur (Fe-S) centers, to quinones in the respiratory chain. The immediate electron acceptor for the enzyme in this species is believed to be ubiquinone. Couples the redox reaction to proton translocation (for every two electrons transferred, four hydrogen ions are translocated across the cytoplasmic membrane), and thus conserves the redox energy in a proton gradient.</text>
</comment>
<comment type="catalytic activity">
    <reaction evidence="1">
        <text>a quinone + NADH + 5 H(+)(in) = a quinol + NAD(+) + 4 H(+)(out)</text>
        <dbReference type="Rhea" id="RHEA:57888"/>
        <dbReference type="ChEBI" id="CHEBI:15378"/>
        <dbReference type="ChEBI" id="CHEBI:24646"/>
        <dbReference type="ChEBI" id="CHEBI:57540"/>
        <dbReference type="ChEBI" id="CHEBI:57945"/>
        <dbReference type="ChEBI" id="CHEBI:132124"/>
    </reaction>
</comment>
<comment type="subunit">
    <text evidence="1">NDH-1 is composed of 14 different subunits. Subunits NuoB, C, D, E, F, and G constitute the peripheral sector of the complex.</text>
</comment>
<comment type="subcellular location">
    <subcellularLocation>
        <location evidence="1">Cell inner membrane</location>
        <topology evidence="1">Peripheral membrane protein</topology>
        <orientation evidence="1">Cytoplasmic side</orientation>
    </subcellularLocation>
</comment>
<comment type="similarity">
    <text evidence="1">Belongs to the complex I 49 kDa subunit family.</text>
</comment>
<evidence type="ECO:0000255" key="1">
    <source>
        <dbReference type="HAMAP-Rule" id="MF_01358"/>
    </source>
</evidence>